<reference key="1">
    <citation type="submission" date="2007-08" db="EMBL/GenBank/DDBJ databases">
        <title>Complete sequence of Thermotoga lettingae TMO.</title>
        <authorList>
            <consortium name="US DOE Joint Genome Institute"/>
            <person name="Copeland A."/>
            <person name="Lucas S."/>
            <person name="Lapidus A."/>
            <person name="Barry K."/>
            <person name="Glavina del Rio T."/>
            <person name="Dalin E."/>
            <person name="Tice H."/>
            <person name="Pitluck S."/>
            <person name="Foster B."/>
            <person name="Bruce D."/>
            <person name="Schmutz J."/>
            <person name="Larimer F."/>
            <person name="Land M."/>
            <person name="Hauser L."/>
            <person name="Kyrpides N."/>
            <person name="Mikhailova N."/>
            <person name="Nelson K."/>
            <person name="Gogarten J.P."/>
            <person name="Noll K."/>
            <person name="Richardson P."/>
        </authorList>
    </citation>
    <scope>NUCLEOTIDE SEQUENCE [LARGE SCALE GENOMIC DNA]</scope>
    <source>
        <strain>ATCC BAA-301 / DSM 14385 / NBRC 107922 / TMO</strain>
    </source>
</reference>
<name>GLMU_PSELT</name>
<protein>
    <recommendedName>
        <fullName evidence="1">Bifunctional protein GlmU</fullName>
    </recommendedName>
    <domain>
        <recommendedName>
            <fullName evidence="1">UDP-N-acetylglucosamine pyrophosphorylase</fullName>
            <ecNumber evidence="1">2.7.7.23</ecNumber>
        </recommendedName>
        <alternativeName>
            <fullName evidence="1">N-acetylglucosamine-1-phosphate uridyltransferase</fullName>
        </alternativeName>
    </domain>
    <domain>
        <recommendedName>
            <fullName evidence="1">Glucosamine-1-phosphate N-acetyltransferase</fullName>
            <ecNumber evidence="1">2.3.1.157</ecNumber>
        </recommendedName>
    </domain>
</protein>
<feature type="chain" id="PRO_1000069737" description="Bifunctional protein GlmU">
    <location>
        <begin position="1"/>
        <end position="450"/>
    </location>
</feature>
<feature type="region of interest" description="Pyrophosphorylase" evidence="1">
    <location>
        <begin position="1"/>
        <end position="221"/>
    </location>
</feature>
<feature type="region of interest" description="Linker" evidence="1">
    <location>
        <begin position="222"/>
        <end position="242"/>
    </location>
</feature>
<feature type="region of interest" description="N-acetyltransferase" evidence="1">
    <location>
        <begin position="243"/>
        <end position="450"/>
    </location>
</feature>
<feature type="active site" description="Proton acceptor" evidence="1">
    <location>
        <position position="354"/>
    </location>
</feature>
<feature type="binding site" evidence="1">
    <location>
        <begin position="6"/>
        <end position="9"/>
    </location>
    <ligand>
        <name>UDP-N-acetyl-alpha-D-glucosamine</name>
        <dbReference type="ChEBI" id="CHEBI:57705"/>
    </ligand>
</feature>
<feature type="binding site" evidence="1">
    <location>
        <position position="20"/>
    </location>
    <ligand>
        <name>UDP-N-acetyl-alpha-D-glucosamine</name>
        <dbReference type="ChEBI" id="CHEBI:57705"/>
    </ligand>
</feature>
<feature type="binding site" evidence="1">
    <location>
        <position position="69"/>
    </location>
    <ligand>
        <name>UDP-N-acetyl-alpha-D-glucosamine</name>
        <dbReference type="ChEBI" id="CHEBI:57705"/>
    </ligand>
</feature>
<feature type="binding site" evidence="1">
    <location>
        <begin position="74"/>
        <end position="75"/>
    </location>
    <ligand>
        <name>UDP-N-acetyl-alpha-D-glucosamine</name>
        <dbReference type="ChEBI" id="CHEBI:57705"/>
    </ligand>
</feature>
<feature type="binding site" evidence="1">
    <location>
        <begin position="96"/>
        <end position="98"/>
    </location>
    <ligand>
        <name>UDP-N-acetyl-alpha-D-glucosamine</name>
        <dbReference type="ChEBI" id="CHEBI:57705"/>
    </ligand>
</feature>
<feature type="binding site" evidence="1">
    <location>
        <position position="98"/>
    </location>
    <ligand>
        <name>Mg(2+)</name>
        <dbReference type="ChEBI" id="CHEBI:18420"/>
    </ligand>
</feature>
<feature type="binding site" evidence="1">
    <location>
        <position position="135"/>
    </location>
    <ligand>
        <name>UDP-N-acetyl-alpha-D-glucosamine</name>
        <dbReference type="ChEBI" id="CHEBI:57705"/>
    </ligand>
</feature>
<feature type="binding site" evidence="1">
    <location>
        <position position="150"/>
    </location>
    <ligand>
        <name>UDP-N-acetyl-alpha-D-glucosamine</name>
        <dbReference type="ChEBI" id="CHEBI:57705"/>
    </ligand>
</feature>
<feature type="binding site" evidence="1">
    <location>
        <position position="165"/>
    </location>
    <ligand>
        <name>UDP-N-acetyl-alpha-D-glucosamine</name>
        <dbReference type="ChEBI" id="CHEBI:57705"/>
    </ligand>
</feature>
<feature type="binding site" evidence="1">
    <location>
        <position position="219"/>
    </location>
    <ligand>
        <name>Mg(2+)</name>
        <dbReference type="ChEBI" id="CHEBI:18420"/>
    </ligand>
</feature>
<feature type="binding site" evidence="1">
    <location>
        <position position="219"/>
    </location>
    <ligand>
        <name>UDP-N-acetyl-alpha-D-glucosamine</name>
        <dbReference type="ChEBI" id="CHEBI:57705"/>
    </ligand>
</feature>
<feature type="binding site" evidence="1">
    <location>
        <position position="324"/>
    </location>
    <ligand>
        <name>UDP-N-acetyl-alpha-D-glucosamine</name>
        <dbReference type="ChEBI" id="CHEBI:57705"/>
    </ligand>
</feature>
<feature type="binding site" evidence="1">
    <location>
        <position position="342"/>
    </location>
    <ligand>
        <name>UDP-N-acetyl-alpha-D-glucosamine</name>
        <dbReference type="ChEBI" id="CHEBI:57705"/>
    </ligand>
</feature>
<feature type="binding site" evidence="1">
    <location>
        <position position="357"/>
    </location>
    <ligand>
        <name>UDP-N-acetyl-alpha-D-glucosamine</name>
        <dbReference type="ChEBI" id="CHEBI:57705"/>
    </ligand>
</feature>
<feature type="binding site" evidence="1">
    <location>
        <position position="368"/>
    </location>
    <ligand>
        <name>UDP-N-acetyl-alpha-D-glucosamine</name>
        <dbReference type="ChEBI" id="CHEBI:57705"/>
    </ligand>
</feature>
<feature type="binding site" evidence="1">
    <location>
        <position position="371"/>
    </location>
    <ligand>
        <name>acetyl-CoA</name>
        <dbReference type="ChEBI" id="CHEBI:57288"/>
    </ligand>
</feature>
<feature type="binding site" evidence="1">
    <location>
        <position position="396"/>
    </location>
    <ligand>
        <name>acetyl-CoA</name>
        <dbReference type="ChEBI" id="CHEBI:57288"/>
    </ligand>
</feature>
<feature type="binding site" evidence="1">
    <location>
        <position position="414"/>
    </location>
    <ligand>
        <name>acetyl-CoA</name>
        <dbReference type="ChEBI" id="CHEBI:57288"/>
    </ligand>
</feature>
<feature type="binding site" evidence="1">
    <location>
        <position position="431"/>
    </location>
    <ligand>
        <name>acetyl-CoA</name>
        <dbReference type="ChEBI" id="CHEBI:57288"/>
    </ligand>
</feature>
<proteinExistence type="inferred from homology"/>
<accession>A8F4D4</accession>
<keyword id="KW-0012">Acyltransferase</keyword>
<keyword id="KW-0133">Cell shape</keyword>
<keyword id="KW-0961">Cell wall biogenesis/degradation</keyword>
<keyword id="KW-0963">Cytoplasm</keyword>
<keyword id="KW-0460">Magnesium</keyword>
<keyword id="KW-0479">Metal-binding</keyword>
<keyword id="KW-0511">Multifunctional enzyme</keyword>
<keyword id="KW-0548">Nucleotidyltransferase</keyword>
<keyword id="KW-0573">Peptidoglycan synthesis</keyword>
<keyword id="KW-1185">Reference proteome</keyword>
<keyword id="KW-0677">Repeat</keyword>
<keyword id="KW-0808">Transferase</keyword>
<organism>
    <name type="scientific">Pseudothermotoga lettingae (strain ATCC BAA-301 / DSM 14385 / NBRC 107922 / TMO)</name>
    <name type="common">Thermotoga lettingae</name>
    <dbReference type="NCBI Taxonomy" id="416591"/>
    <lineage>
        <taxon>Bacteria</taxon>
        <taxon>Thermotogati</taxon>
        <taxon>Thermotogota</taxon>
        <taxon>Thermotogae</taxon>
        <taxon>Thermotogales</taxon>
        <taxon>Thermotogaceae</taxon>
        <taxon>Pseudothermotoga</taxon>
    </lineage>
</organism>
<evidence type="ECO:0000255" key="1">
    <source>
        <dbReference type="HAMAP-Rule" id="MF_01631"/>
    </source>
</evidence>
<sequence>MRCIVLAAGMGVRMNSKYAKVTHTVCGKPMIRWILDTVLNLLDKVCVVVGHDADSVKKLLPENVEVVHQSQQLGTGHAVMSARNFIDPADNLLILYGDMPLITEGTIQKIINSHNLSNCDATVVSVEMNDPTGYGRIVRDKSGKFVKIVEESEASNREKAIVEVNTGVYIFNGRKLLEVLPMINCKNKKGEYYLTDVFAFLERVNIYKSERSCEFIGINNRIQLAQAEKFRRQWILEELMIKGVTIVDPETTYIDADVKIGRDSIIYPMSFIHGDTKIGEDCIIGPMTRIIDSYIGDRVTIVRSECKGARIMSDVSVGPFSRLREGTVLCNGVKIGNFVEIKNSEIDQNTKAQHLTYLGDAVVGKSVNIGAGTITCNFDGKRKNQTVIEDEVFIGSNTALVAPVKVEKGAFVAAGSTINRNVPAWSLAIARARQEIKLNWVIDKRKKEED</sequence>
<comment type="function">
    <text evidence="1">Catalyzes the last two sequential reactions in the de novo biosynthetic pathway for UDP-N-acetylglucosamine (UDP-GlcNAc). The C-terminal domain catalyzes the transfer of acetyl group from acetyl coenzyme A to glucosamine-1-phosphate (GlcN-1-P) to produce N-acetylglucosamine-1-phosphate (GlcNAc-1-P), which is converted into UDP-GlcNAc by the transfer of uridine 5-monophosphate (from uridine 5-triphosphate), a reaction catalyzed by the N-terminal domain.</text>
</comment>
<comment type="catalytic activity">
    <reaction evidence="1">
        <text>alpha-D-glucosamine 1-phosphate + acetyl-CoA = N-acetyl-alpha-D-glucosamine 1-phosphate + CoA + H(+)</text>
        <dbReference type="Rhea" id="RHEA:13725"/>
        <dbReference type="ChEBI" id="CHEBI:15378"/>
        <dbReference type="ChEBI" id="CHEBI:57287"/>
        <dbReference type="ChEBI" id="CHEBI:57288"/>
        <dbReference type="ChEBI" id="CHEBI:57776"/>
        <dbReference type="ChEBI" id="CHEBI:58516"/>
        <dbReference type="EC" id="2.3.1.157"/>
    </reaction>
</comment>
<comment type="catalytic activity">
    <reaction evidence="1">
        <text>N-acetyl-alpha-D-glucosamine 1-phosphate + UTP + H(+) = UDP-N-acetyl-alpha-D-glucosamine + diphosphate</text>
        <dbReference type="Rhea" id="RHEA:13509"/>
        <dbReference type="ChEBI" id="CHEBI:15378"/>
        <dbReference type="ChEBI" id="CHEBI:33019"/>
        <dbReference type="ChEBI" id="CHEBI:46398"/>
        <dbReference type="ChEBI" id="CHEBI:57705"/>
        <dbReference type="ChEBI" id="CHEBI:57776"/>
        <dbReference type="EC" id="2.7.7.23"/>
    </reaction>
</comment>
<comment type="cofactor">
    <cofactor evidence="1">
        <name>Mg(2+)</name>
        <dbReference type="ChEBI" id="CHEBI:18420"/>
    </cofactor>
    <text evidence="1">Binds 1 Mg(2+) ion per subunit.</text>
</comment>
<comment type="pathway">
    <text evidence="1">Nucleotide-sugar biosynthesis; UDP-N-acetyl-alpha-D-glucosamine biosynthesis; N-acetyl-alpha-D-glucosamine 1-phosphate from alpha-D-glucosamine 6-phosphate (route II): step 2/2.</text>
</comment>
<comment type="pathway">
    <text evidence="1">Nucleotide-sugar biosynthesis; UDP-N-acetyl-alpha-D-glucosamine biosynthesis; UDP-N-acetyl-alpha-D-glucosamine from N-acetyl-alpha-D-glucosamine 1-phosphate: step 1/1.</text>
</comment>
<comment type="pathway">
    <text evidence="1">Bacterial outer membrane biogenesis; LPS lipid A biosynthesis.</text>
</comment>
<comment type="subunit">
    <text evidence="1">Homotrimer.</text>
</comment>
<comment type="subcellular location">
    <subcellularLocation>
        <location evidence="1">Cytoplasm</location>
    </subcellularLocation>
</comment>
<comment type="similarity">
    <text evidence="1">In the N-terminal section; belongs to the N-acetylglucosamine-1-phosphate uridyltransferase family.</text>
</comment>
<comment type="similarity">
    <text evidence="1">In the C-terminal section; belongs to the transferase hexapeptide repeat family.</text>
</comment>
<dbReference type="EC" id="2.7.7.23" evidence="1"/>
<dbReference type="EC" id="2.3.1.157" evidence="1"/>
<dbReference type="EMBL" id="CP000812">
    <property type="protein sequence ID" value="ABV33018.1"/>
    <property type="molecule type" value="Genomic_DNA"/>
</dbReference>
<dbReference type="RefSeq" id="WP_012002499.1">
    <property type="nucleotide sequence ID" value="NZ_BSDV01000001.1"/>
</dbReference>
<dbReference type="SMR" id="A8F4D4"/>
<dbReference type="STRING" id="416591.Tlet_0451"/>
<dbReference type="KEGG" id="tle:Tlet_0451"/>
<dbReference type="eggNOG" id="COG1207">
    <property type="taxonomic scope" value="Bacteria"/>
</dbReference>
<dbReference type="HOGENOM" id="CLU_029499_15_2_0"/>
<dbReference type="OrthoDB" id="9775031at2"/>
<dbReference type="UniPathway" id="UPA00113">
    <property type="reaction ID" value="UER00532"/>
</dbReference>
<dbReference type="UniPathway" id="UPA00113">
    <property type="reaction ID" value="UER00533"/>
</dbReference>
<dbReference type="UniPathway" id="UPA00973"/>
<dbReference type="Proteomes" id="UP000002016">
    <property type="component" value="Chromosome"/>
</dbReference>
<dbReference type="GO" id="GO:0005737">
    <property type="term" value="C:cytoplasm"/>
    <property type="evidence" value="ECO:0007669"/>
    <property type="project" value="UniProtKB-SubCell"/>
</dbReference>
<dbReference type="GO" id="GO:0016020">
    <property type="term" value="C:membrane"/>
    <property type="evidence" value="ECO:0007669"/>
    <property type="project" value="GOC"/>
</dbReference>
<dbReference type="GO" id="GO:0019134">
    <property type="term" value="F:glucosamine-1-phosphate N-acetyltransferase activity"/>
    <property type="evidence" value="ECO:0007669"/>
    <property type="project" value="UniProtKB-UniRule"/>
</dbReference>
<dbReference type="GO" id="GO:0000287">
    <property type="term" value="F:magnesium ion binding"/>
    <property type="evidence" value="ECO:0007669"/>
    <property type="project" value="UniProtKB-UniRule"/>
</dbReference>
<dbReference type="GO" id="GO:0003977">
    <property type="term" value="F:UDP-N-acetylglucosamine diphosphorylase activity"/>
    <property type="evidence" value="ECO:0007669"/>
    <property type="project" value="UniProtKB-UniRule"/>
</dbReference>
<dbReference type="GO" id="GO:0000902">
    <property type="term" value="P:cell morphogenesis"/>
    <property type="evidence" value="ECO:0007669"/>
    <property type="project" value="UniProtKB-UniRule"/>
</dbReference>
<dbReference type="GO" id="GO:0071555">
    <property type="term" value="P:cell wall organization"/>
    <property type="evidence" value="ECO:0007669"/>
    <property type="project" value="UniProtKB-KW"/>
</dbReference>
<dbReference type="GO" id="GO:0009245">
    <property type="term" value="P:lipid A biosynthetic process"/>
    <property type="evidence" value="ECO:0007669"/>
    <property type="project" value="UniProtKB-UniRule"/>
</dbReference>
<dbReference type="GO" id="GO:0009252">
    <property type="term" value="P:peptidoglycan biosynthetic process"/>
    <property type="evidence" value="ECO:0007669"/>
    <property type="project" value="UniProtKB-UniRule"/>
</dbReference>
<dbReference type="GO" id="GO:0008360">
    <property type="term" value="P:regulation of cell shape"/>
    <property type="evidence" value="ECO:0007669"/>
    <property type="project" value="UniProtKB-KW"/>
</dbReference>
<dbReference type="GO" id="GO:0006048">
    <property type="term" value="P:UDP-N-acetylglucosamine biosynthetic process"/>
    <property type="evidence" value="ECO:0007669"/>
    <property type="project" value="UniProtKB-UniPathway"/>
</dbReference>
<dbReference type="CDD" id="cd02540">
    <property type="entry name" value="GT2_GlmU_N_bac"/>
    <property type="match status" value="1"/>
</dbReference>
<dbReference type="CDD" id="cd03353">
    <property type="entry name" value="LbH_GlmU_C"/>
    <property type="match status" value="1"/>
</dbReference>
<dbReference type="Gene3D" id="2.160.10.10">
    <property type="entry name" value="Hexapeptide repeat proteins"/>
    <property type="match status" value="1"/>
</dbReference>
<dbReference type="Gene3D" id="3.90.550.10">
    <property type="entry name" value="Spore Coat Polysaccharide Biosynthesis Protein SpsA, Chain A"/>
    <property type="match status" value="1"/>
</dbReference>
<dbReference type="HAMAP" id="MF_01631">
    <property type="entry name" value="GlmU"/>
    <property type="match status" value="1"/>
</dbReference>
<dbReference type="InterPro" id="IPR005882">
    <property type="entry name" value="Bifunctional_GlmU"/>
</dbReference>
<dbReference type="InterPro" id="IPR050065">
    <property type="entry name" value="GlmU-like"/>
</dbReference>
<dbReference type="InterPro" id="IPR038009">
    <property type="entry name" value="GlmU_C_LbH"/>
</dbReference>
<dbReference type="InterPro" id="IPR001451">
    <property type="entry name" value="Hexapep"/>
</dbReference>
<dbReference type="InterPro" id="IPR018357">
    <property type="entry name" value="Hexapep_transf_CS"/>
</dbReference>
<dbReference type="InterPro" id="IPR025877">
    <property type="entry name" value="MobA-like_NTP_Trfase"/>
</dbReference>
<dbReference type="InterPro" id="IPR029044">
    <property type="entry name" value="Nucleotide-diphossugar_trans"/>
</dbReference>
<dbReference type="InterPro" id="IPR011004">
    <property type="entry name" value="Trimer_LpxA-like_sf"/>
</dbReference>
<dbReference type="NCBIfam" id="TIGR01173">
    <property type="entry name" value="glmU"/>
    <property type="match status" value="1"/>
</dbReference>
<dbReference type="NCBIfam" id="NF010934">
    <property type="entry name" value="PRK14354.1"/>
    <property type="match status" value="1"/>
</dbReference>
<dbReference type="NCBIfam" id="NF010937">
    <property type="entry name" value="PRK14357.1"/>
    <property type="match status" value="1"/>
</dbReference>
<dbReference type="PANTHER" id="PTHR43584:SF3">
    <property type="entry name" value="BIFUNCTIONAL PROTEIN GLMU"/>
    <property type="match status" value="1"/>
</dbReference>
<dbReference type="PANTHER" id="PTHR43584">
    <property type="entry name" value="NUCLEOTIDYL TRANSFERASE"/>
    <property type="match status" value="1"/>
</dbReference>
<dbReference type="Pfam" id="PF00132">
    <property type="entry name" value="Hexapep"/>
    <property type="match status" value="1"/>
</dbReference>
<dbReference type="Pfam" id="PF12804">
    <property type="entry name" value="NTP_transf_3"/>
    <property type="match status" value="1"/>
</dbReference>
<dbReference type="SUPFAM" id="SSF53448">
    <property type="entry name" value="Nucleotide-diphospho-sugar transferases"/>
    <property type="match status" value="1"/>
</dbReference>
<dbReference type="SUPFAM" id="SSF51161">
    <property type="entry name" value="Trimeric LpxA-like enzymes"/>
    <property type="match status" value="1"/>
</dbReference>
<dbReference type="PROSITE" id="PS00101">
    <property type="entry name" value="HEXAPEP_TRANSFERASES"/>
    <property type="match status" value="1"/>
</dbReference>
<gene>
    <name evidence="1" type="primary">glmU</name>
    <name type="ordered locus">Tlet_0451</name>
</gene>